<comment type="function">
    <text evidence="2">Cell wall formation.</text>
</comment>
<comment type="catalytic activity">
    <reaction evidence="2">
        <text>2 D-alanine + ATP = D-alanyl-D-alanine + ADP + phosphate + H(+)</text>
        <dbReference type="Rhea" id="RHEA:11224"/>
        <dbReference type="ChEBI" id="CHEBI:15378"/>
        <dbReference type="ChEBI" id="CHEBI:30616"/>
        <dbReference type="ChEBI" id="CHEBI:43474"/>
        <dbReference type="ChEBI" id="CHEBI:57416"/>
        <dbReference type="ChEBI" id="CHEBI:57822"/>
        <dbReference type="ChEBI" id="CHEBI:456216"/>
        <dbReference type="EC" id="6.3.2.4"/>
    </reaction>
</comment>
<comment type="cofactor">
    <cofactor evidence="1">
        <name>Mg(2+)</name>
        <dbReference type="ChEBI" id="CHEBI:18420"/>
    </cofactor>
    <cofactor evidence="1">
        <name>Mn(2+)</name>
        <dbReference type="ChEBI" id="CHEBI:29035"/>
    </cofactor>
    <text evidence="1">Binds 2 magnesium or manganese ions per subunit.</text>
</comment>
<comment type="pathway">
    <text evidence="2">Cell wall biogenesis; peptidoglycan biosynthesis.</text>
</comment>
<comment type="subcellular location">
    <subcellularLocation>
        <location evidence="2">Cytoplasm</location>
    </subcellularLocation>
</comment>
<comment type="similarity">
    <text evidence="2">Belongs to the D-alanine--D-alanine ligase family.</text>
</comment>
<organism>
    <name type="scientific">Aromatoleum aromaticum (strain DSM 19018 / LMG 30748 / EbN1)</name>
    <name type="common">Azoarcus sp. (strain EbN1)</name>
    <dbReference type="NCBI Taxonomy" id="76114"/>
    <lineage>
        <taxon>Bacteria</taxon>
        <taxon>Pseudomonadati</taxon>
        <taxon>Pseudomonadota</taxon>
        <taxon>Betaproteobacteria</taxon>
        <taxon>Rhodocyclales</taxon>
        <taxon>Rhodocyclaceae</taxon>
        <taxon>Aromatoleum</taxon>
    </lineage>
</organism>
<dbReference type="EC" id="6.3.2.4" evidence="2"/>
<dbReference type="EMBL" id="CR555306">
    <property type="protein sequence ID" value="CAI06913.1"/>
    <property type="molecule type" value="Genomic_DNA"/>
</dbReference>
<dbReference type="SMR" id="Q5P6Z8"/>
<dbReference type="STRING" id="76114.ebA1442"/>
<dbReference type="KEGG" id="eba:ebA1442"/>
<dbReference type="eggNOG" id="COG1181">
    <property type="taxonomic scope" value="Bacteria"/>
</dbReference>
<dbReference type="HOGENOM" id="CLU_039268_1_2_4"/>
<dbReference type="UniPathway" id="UPA00219"/>
<dbReference type="Proteomes" id="UP000006552">
    <property type="component" value="Chromosome"/>
</dbReference>
<dbReference type="GO" id="GO:0005829">
    <property type="term" value="C:cytosol"/>
    <property type="evidence" value="ECO:0007669"/>
    <property type="project" value="TreeGrafter"/>
</dbReference>
<dbReference type="GO" id="GO:0005524">
    <property type="term" value="F:ATP binding"/>
    <property type="evidence" value="ECO:0007669"/>
    <property type="project" value="UniProtKB-KW"/>
</dbReference>
<dbReference type="GO" id="GO:0008716">
    <property type="term" value="F:D-alanine-D-alanine ligase activity"/>
    <property type="evidence" value="ECO:0007669"/>
    <property type="project" value="UniProtKB-UniRule"/>
</dbReference>
<dbReference type="GO" id="GO:0046872">
    <property type="term" value="F:metal ion binding"/>
    <property type="evidence" value="ECO:0007669"/>
    <property type="project" value="UniProtKB-KW"/>
</dbReference>
<dbReference type="GO" id="GO:0071555">
    <property type="term" value="P:cell wall organization"/>
    <property type="evidence" value="ECO:0007669"/>
    <property type="project" value="UniProtKB-KW"/>
</dbReference>
<dbReference type="GO" id="GO:0009252">
    <property type="term" value="P:peptidoglycan biosynthetic process"/>
    <property type="evidence" value="ECO:0007669"/>
    <property type="project" value="UniProtKB-UniRule"/>
</dbReference>
<dbReference type="GO" id="GO:0008360">
    <property type="term" value="P:regulation of cell shape"/>
    <property type="evidence" value="ECO:0007669"/>
    <property type="project" value="UniProtKB-KW"/>
</dbReference>
<dbReference type="FunFam" id="3.40.50.20:FF:000013">
    <property type="entry name" value="D-alanine--D-alanine ligase"/>
    <property type="match status" value="1"/>
</dbReference>
<dbReference type="Gene3D" id="3.40.50.20">
    <property type="match status" value="1"/>
</dbReference>
<dbReference type="Gene3D" id="3.30.1490.20">
    <property type="entry name" value="ATP-grasp fold, A domain"/>
    <property type="match status" value="1"/>
</dbReference>
<dbReference type="Gene3D" id="3.30.470.20">
    <property type="entry name" value="ATP-grasp fold, B domain"/>
    <property type="match status" value="1"/>
</dbReference>
<dbReference type="HAMAP" id="MF_00047">
    <property type="entry name" value="Dala_Dala_lig"/>
    <property type="match status" value="1"/>
</dbReference>
<dbReference type="InterPro" id="IPR011761">
    <property type="entry name" value="ATP-grasp"/>
</dbReference>
<dbReference type="InterPro" id="IPR013815">
    <property type="entry name" value="ATP_grasp_subdomain_1"/>
</dbReference>
<dbReference type="InterPro" id="IPR000291">
    <property type="entry name" value="D-Ala_lig_Van_CS"/>
</dbReference>
<dbReference type="InterPro" id="IPR005905">
    <property type="entry name" value="D_ala_D_ala"/>
</dbReference>
<dbReference type="InterPro" id="IPR011095">
    <property type="entry name" value="Dala_Dala_lig_C"/>
</dbReference>
<dbReference type="InterPro" id="IPR011127">
    <property type="entry name" value="Dala_Dala_lig_N"/>
</dbReference>
<dbReference type="InterPro" id="IPR016185">
    <property type="entry name" value="PreATP-grasp_dom_sf"/>
</dbReference>
<dbReference type="NCBIfam" id="TIGR01205">
    <property type="entry name" value="D_ala_D_alaTIGR"/>
    <property type="match status" value="1"/>
</dbReference>
<dbReference type="NCBIfam" id="NF002378">
    <property type="entry name" value="PRK01372.1"/>
    <property type="match status" value="1"/>
</dbReference>
<dbReference type="PANTHER" id="PTHR23132">
    <property type="entry name" value="D-ALANINE--D-ALANINE LIGASE"/>
    <property type="match status" value="1"/>
</dbReference>
<dbReference type="PANTHER" id="PTHR23132:SF23">
    <property type="entry name" value="D-ALANINE--D-ALANINE LIGASE B"/>
    <property type="match status" value="1"/>
</dbReference>
<dbReference type="Pfam" id="PF07478">
    <property type="entry name" value="Dala_Dala_lig_C"/>
    <property type="match status" value="1"/>
</dbReference>
<dbReference type="Pfam" id="PF01820">
    <property type="entry name" value="Dala_Dala_lig_N"/>
    <property type="match status" value="1"/>
</dbReference>
<dbReference type="PIRSF" id="PIRSF039102">
    <property type="entry name" value="Ddl/VanB"/>
    <property type="match status" value="1"/>
</dbReference>
<dbReference type="SUPFAM" id="SSF56059">
    <property type="entry name" value="Glutathione synthetase ATP-binding domain-like"/>
    <property type="match status" value="1"/>
</dbReference>
<dbReference type="SUPFAM" id="SSF52440">
    <property type="entry name" value="PreATP-grasp domain"/>
    <property type="match status" value="1"/>
</dbReference>
<dbReference type="PROSITE" id="PS50975">
    <property type="entry name" value="ATP_GRASP"/>
    <property type="match status" value="1"/>
</dbReference>
<dbReference type="PROSITE" id="PS00843">
    <property type="entry name" value="DALA_DALA_LIGASE_1"/>
    <property type="match status" value="1"/>
</dbReference>
<dbReference type="PROSITE" id="PS00844">
    <property type="entry name" value="DALA_DALA_LIGASE_2"/>
    <property type="match status" value="1"/>
</dbReference>
<protein>
    <recommendedName>
        <fullName evidence="2">D-alanine--D-alanine ligase</fullName>
        <ecNumber evidence="2">6.3.2.4</ecNumber>
    </recommendedName>
    <alternativeName>
        <fullName evidence="2">D-Ala-D-Ala ligase</fullName>
    </alternativeName>
    <alternativeName>
        <fullName evidence="2">D-alanylalanine synthetase</fullName>
    </alternativeName>
</protein>
<name>DDL_AROAE</name>
<feature type="chain" id="PRO_0000341056" description="D-alanine--D-alanine ligase">
    <location>
        <begin position="1"/>
        <end position="309"/>
    </location>
</feature>
<feature type="domain" description="ATP-grasp" evidence="2">
    <location>
        <begin position="109"/>
        <end position="304"/>
    </location>
</feature>
<feature type="binding site" evidence="2">
    <location>
        <begin position="135"/>
        <end position="190"/>
    </location>
    <ligand>
        <name>ATP</name>
        <dbReference type="ChEBI" id="CHEBI:30616"/>
    </ligand>
</feature>
<feature type="binding site" evidence="2">
    <location>
        <position position="258"/>
    </location>
    <ligand>
        <name>Mg(2+)</name>
        <dbReference type="ChEBI" id="CHEBI:18420"/>
        <label>1</label>
    </ligand>
</feature>
<feature type="binding site" evidence="2">
    <location>
        <position position="271"/>
    </location>
    <ligand>
        <name>Mg(2+)</name>
        <dbReference type="ChEBI" id="CHEBI:18420"/>
        <label>1</label>
    </ligand>
</feature>
<feature type="binding site" evidence="2">
    <location>
        <position position="271"/>
    </location>
    <ligand>
        <name>Mg(2+)</name>
        <dbReference type="ChEBI" id="CHEBI:18420"/>
        <label>2</label>
    </ligand>
</feature>
<feature type="binding site" evidence="2">
    <location>
        <position position="273"/>
    </location>
    <ligand>
        <name>Mg(2+)</name>
        <dbReference type="ChEBI" id="CHEBI:18420"/>
        <label>2</label>
    </ligand>
</feature>
<keyword id="KW-0067">ATP-binding</keyword>
<keyword id="KW-0133">Cell shape</keyword>
<keyword id="KW-0961">Cell wall biogenesis/degradation</keyword>
<keyword id="KW-0963">Cytoplasm</keyword>
<keyword id="KW-0436">Ligase</keyword>
<keyword id="KW-0460">Magnesium</keyword>
<keyword id="KW-0464">Manganese</keyword>
<keyword id="KW-0479">Metal-binding</keyword>
<keyword id="KW-0547">Nucleotide-binding</keyword>
<keyword id="KW-0573">Peptidoglycan synthesis</keyword>
<keyword id="KW-1185">Reference proteome</keyword>
<gene>
    <name evidence="2" type="primary">ddl</name>
    <name type="ordered locus">AZOSEA07900</name>
    <name type="ORF">ebA1442</name>
</gene>
<accession>Q5P6Z8</accession>
<proteinExistence type="inferred from homology"/>
<evidence type="ECO:0000250" key="1"/>
<evidence type="ECO:0000255" key="2">
    <source>
        <dbReference type="HAMAP-Rule" id="MF_00047"/>
    </source>
</evidence>
<sequence>MRGNGVGAKFGKVAVLLGGTSAEREVSLMSGGAVLAALQAAGVDAHGFDPAQQDLHILKEQGFDRAFIALHGRGGEDGTVQGLLELLKIPYTGSGVMASALAMDKWRTKMVWAACGLPTPRYAILAGDTDWEAVVAELGLPIFVKPVHEGSSMGATKVTAASQLKAAWERAARFDDLVLAEEFIVGAELTVPFLAERALPVIRIEAPGGKYDYQNKYFTDETRYLCPSGLPAEQEQALQALVMKSARALGCRGWGRADLMLTGDGRPYLLEMNTSPGMTGHSLVPMAAKAVGLDFTALCLAILEDARLG</sequence>
<reference key="1">
    <citation type="journal article" date="2005" name="Arch. Microbiol.">
        <title>The genome sequence of an anaerobic aromatic-degrading denitrifying bacterium, strain EbN1.</title>
        <authorList>
            <person name="Rabus R."/>
            <person name="Kube M."/>
            <person name="Heider J."/>
            <person name="Beck A."/>
            <person name="Heitmann K."/>
            <person name="Widdel F."/>
            <person name="Reinhardt R."/>
        </authorList>
    </citation>
    <scope>NUCLEOTIDE SEQUENCE [LARGE SCALE GENOMIC DNA]</scope>
    <source>
        <strain>DSM 19018 / LMG 30748 / EbN1</strain>
    </source>
</reference>